<protein>
    <recommendedName>
        <fullName evidence="1">Chaperone protein DnaJ</fullName>
    </recommendedName>
</protein>
<dbReference type="EMBL" id="CP000951">
    <property type="protein sequence ID" value="ACA98698.1"/>
    <property type="molecule type" value="Genomic_DNA"/>
</dbReference>
<dbReference type="RefSeq" id="WP_012306322.1">
    <property type="nucleotide sequence ID" value="NZ_JAHHPU010000001.1"/>
</dbReference>
<dbReference type="SMR" id="B1XQF6"/>
<dbReference type="STRING" id="32049.SYNPCC7002_A0693"/>
<dbReference type="KEGG" id="syp:SYNPCC7002_A0693"/>
<dbReference type="eggNOG" id="COG0484">
    <property type="taxonomic scope" value="Bacteria"/>
</dbReference>
<dbReference type="HOGENOM" id="CLU_017633_0_1_3"/>
<dbReference type="Proteomes" id="UP000001688">
    <property type="component" value="Chromosome"/>
</dbReference>
<dbReference type="GO" id="GO:0005737">
    <property type="term" value="C:cytoplasm"/>
    <property type="evidence" value="ECO:0007669"/>
    <property type="project" value="UniProtKB-SubCell"/>
</dbReference>
<dbReference type="GO" id="GO:0005524">
    <property type="term" value="F:ATP binding"/>
    <property type="evidence" value="ECO:0007669"/>
    <property type="project" value="InterPro"/>
</dbReference>
<dbReference type="GO" id="GO:0031072">
    <property type="term" value="F:heat shock protein binding"/>
    <property type="evidence" value="ECO:0007669"/>
    <property type="project" value="InterPro"/>
</dbReference>
<dbReference type="GO" id="GO:0051082">
    <property type="term" value="F:unfolded protein binding"/>
    <property type="evidence" value="ECO:0007669"/>
    <property type="project" value="UniProtKB-UniRule"/>
</dbReference>
<dbReference type="GO" id="GO:0008270">
    <property type="term" value="F:zinc ion binding"/>
    <property type="evidence" value="ECO:0007669"/>
    <property type="project" value="UniProtKB-UniRule"/>
</dbReference>
<dbReference type="GO" id="GO:0051085">
    <property type="term" value="P:chaperone cofactor-dependent protein refolding"/>
    <property type="evidence" value="ECO:0007669"/>
    <property type="project" value="TreeGrafter"/>
</dbReference>
<dbReference type="GO" id="GO:0006260">
    <property type="term" value="P:DNA replication"/>
    <property type="evidence" value="ECO:0007669"/>
    <property type="project" value="UniProtKB-KW"/>
</dbReference>
<dbReference type="GO" id="GO:0042026">
    <property type="term" value="P:protein refolding"/>
    <property type="evidence" value="ECO:0007669"/>
    <property type="project" value="TreeGrafter"/>
</dbReference>
<dbReference type="GO" id="GO:0009408">
    <property type="term" value="P:response to heat"/>
    <property type="evidence" value="ECO:0007669"/>
    <property type="project" value="InterPro"/>
</dbReference>
<dbReference type="CDD" id="cd06257">
    <property type="entry name" value="DnaJ"/>
    <property type="match status" value="1"/>
</dbReference>
<dbReference type="CDD" id="cd10747">
    <property type="entry name" value="DnaJ_C"/>
    <property type="match status" value="1"/>
</dbReference>
<dbReference type="CDD" id="cd10719">
    <property type="entry name" value="DnaJ_zf"/>
    <property type="match status" value="1"/>
</dbReference>
<dbReference type="FunFam" id="2.60.260.20:FF:000005">
    <property type="entry name" value="Chaperone protein dnaJ 1, mitochondrial"/>
    <property type="match status" value="1"/>
</dbReference>
<dbReference type="FunFam" id="2.10.230.10:FF:000002">
    <property type="entry name" value="Molecular chaperone DnaJ"/>
    <property type="match status" value="1"/>
</dbReference>
<dbReference type="Gene3D" id="1.10.287.110">
    <property type="entry name" value="DnaJ domain"/>
    <property type="match status" value="1"/>
</dbReference>
<dbReference type="Gene3D" id="2.10.230.10">
    <property type="entry name" value="Heat shock protein DnaJ, cysteine-rich domain"/>
    <property type="match status" value="1"/>
</dbReference>
<dbReference type="Gene3D" id="2.60.260.20">
    <property type="entry name" value="Urease metallochaperone UreE, N-terminal domain"/>
    <property type="match status" value="2"/>
</dbReference>
<dbReference type="HAMAP" id="MF_01152">
    <property type="entry name" value="DnaJ"/>
    <property type="match status" value="1"/>
</dbReference>
<dbReference type="InterPro" id="IPR012724">
    <property type="entry name" value="DnaJ"/>
</dbReference>
<dbReference type="InterPro" id="IPR002939">
    <property type="entry name" value="DnaJ_C"/>
</dbReference>
<dbReference type="InterPro" id="IPR001623">
    <property type="entry name" value="DnaJ_domain"/>
</dbReference>
<dbReference type="InterPro" id="IPR008971">
    <property type="entry name" value="HSP40/DnaJ_pept-bd"/>
</dbReference>
<dbReference type="InterPro" id="IPR001305">
    <property type="entry name" value="HSP_DnaJ_Cys-rich_dom"/>
</dbReference>
<dbReference type="InterPro" id="IPR036410">
    <property type="entry name" value="HSP_DnaJ_Cys-rich_dom_sf"/>
</dbReference>
<dbReference type="InterPro" id="IPR036869">
    <property type="entry name" value="J_dom_sf"/>
</dbReference>
<dbReference type="NCBIfam" id="TIGR02349">
    <property type="entry name" value="DnaJ_bact"/>
    <property type="match status" value="1"/>
</dbReference>
<dbReference type="NCBIfam" id="NF008035">
    <property type="entry name" value="PRK10767.1"/>
    <property type="match status" value="1"/>
</dbReference>
<dbReference type="NCBIfam" id="NF010886">
    <property type="entry name" value="PRK14293.1"/>
    <property type="match status" value="1"/>
</dbReference>
<dbReference type="PANTHER" id="PTHR43096:SF10">
    <property type="entry name" value="CHAPERONE PROTEIN DNAJ A6, CHLOROPLASTIC"/>
    <property type="match status" value="1"/>
</dbReference>
<dbReference type="PANTHER" id="PTHR43096">
    <property type="entry name" value="DNAJ HOMOLOG 1, MITOCHONDRIAL-RELATED"/>
    <property type="match status" value="1"/>
</dbReference>
<dbReference type="Pfam" id="PF00226">
    <property type="entry name" value="DnaJ"/>
    <property type="match status" value="1"/>
</dbReference>
<dbReference type="Pfam" id="PF01556">
    <property type="entry name" value="DnaJ_C"/>
    <property type="match status" value="1"/>
</dbReference>
<dbReference type="Pfam" id="PF00684">
    <property type="entry name" value="DnaJ_CXXCXGXG"/>
    <property type="match status" value="1"/>
</dbReference>
<dbReference type="PRINTS" id="PR00625">
    <property type="entry name" value="JDOMAIN"/>
</dbReference>
<dbReference type="SMART" id="SM00271">
    <property type="entry name" value="DnaJ"/>
    <property type="match status" value="1"/>
</dbReference>
<dbReference type="SUPFAM" id="SSF46565">
    <property type="entry name" value="Chaperone J-domain"/>
    <property type="match status" value="1"/>
</dbReference>
<dbReference type="SUPFAM" id="SSF57938">
    <property type="entry name" value="DnaJ/Hsp40 cysteine-rich domain"/>
    <property type="match status" value="1"/>
</dbReference>
<dbReference type="SUPFAM" id="SSF49493">
    <property type="entry name" value="HSP40/DnaJ peptide-binding domain"/>
    <property type="match status" value="2"/>
</dbReference>
<dbReference type="PROSITE" id="PS50076">
    <property type="entry name" value="DNAJ_2"/>
    <property type="match status" value="1"/>
</dbReference>
<dbReference type="PROSITE" id="PS51188">
    <property type="entry name" value="ZF_CR"/>
    <property type="match status" value="1"/>
</dbReference>
<name>DNAJ_PICP2</name>
<feature type="chain" id="PRO_1000137732" description="Chaperone protein DnaJ">
    <location>
        <begin position="1"/>
        <end position="378"/>
    </location>
</feature>
<feature type="domain" description="J" evidence="1">
    <location>
        <begin position="4"/>
        <end position="68"/>
    </location>
</feature>
<feature type="repeat" description="CXXCXGXG motif">
    <location>
        <begin position="149"/>
        <end position="156"/>
    </location>
</feature>
<feature type="repeat" description="CXXCXGXG motif">
    <location>
        <begin position="166"/>
        <end position="173"/>
    </location>
</feature>
<feature type="repeat" description="CXXCXGXG motif">
    <location>
        <begin position="192"/>
        <end position="199"/>
    </location>
</feature>
<feature type="repeat" description="CXXCXGXG motif">
    <location>
        <begin position="206"/>
        <end position="213"/>
    </location>
</feature>
<feature type="zinc finger region" description="CR-type" evidence="1">
    <location>
        <begin position="136"/>
        <end position="218"/>
    </location>
</feature>
<feature type="binding site" evidence="1">
    <location>
        <position position="149"/>
    </location>
    <ligand>
        <name>Zn(2+)</name>
        <dbReference type="ChEBI" id="CHEBI:29105"/>
        <label>1</label>
    </ligand>
</feature>
<feature type="binding site" evidence="1">
    <location>
        <position position="152"/>
    </location>
    <ligand>
        <name>Zn(2+)</name>
        <dbReference type="ChEBI" id="CHEBI:29105"/>
        <label>1</label>
    </ligand>
</feature>
<feature type="binding site" evidence="1">
    <location>
        <position position="166"/>
    </location>
    <ligand>
        <name>Zn(2+)</name>
        <dbReference type="ChEBI" id="CHEBI:29105"/>
        <label>2</label>
    </ligand>
</feature>
<feature type="binding site" evidence="1">
    <location>
        <position position="169"/>
    </location>
    <ligand>
        <name>Zn(2+)</name>
        <dbReference type="ChEBI" id="CHEBI:29105"/>
        <label>2</label>
    </ligand>
</feature>
<feature type="binding site" evidence="1">
    <location>
        <position position="192"/>
    </location>
    <ligand>
        <name>Zn(2+)</name>
        <dbReference type="ChEBI" id="CHEBI:29105"/>
        <label>2</label>
    </ligand>
</feature>
<feature type="binding site" evidence="1">
    <location>
        <position position="195"/>
    </location>
    <ligand>
        <name>Zn(2+)</name>
        <dbReference type="ChEBI" id="CHEBI:29105"/>
        <label>2</label>
    </ligand>
</feature>
<feature type="binding site" evidence="1">
    <location>
        <position position="206"/>
    </location>
    <ligand>
        <name>Zn(2+)</name>
        <dbReference type="ChEBI" id="CHEBI:29105"/>
        <label>1</label>
    </ligand>
</feature>
<feature type="binding site" evidence="1">
    <location>
        <position position="209"/>
    </location>
    <ligand>
        <name>Zn(2+)</name>
        <dbReference type="ChEBI" id="CHEBI:29105"/>
        <label>1</label>
    </ligand>
</feature>
<evidence type="ECO:0000255" key="1">
    <source>
        <dbReference type="HAMAP-Rule" id="MF_01152"/>
    </source>
</evidence>
<keyword id="KW-0143">Chaperone</keyword>
<keyword id="KW-0963">Cytoplasm</keyword>
<keyword id="KW-0235">DNA replication</keyword>
<keyword id="KW-0479">Metal-binding</keyword>
<keyword id="KW-1185">Reference proteome</keyword>
<keyword id="KW-0677">Repeat</keyword>
<keyword id="KW-0346">Stress response</keyword>
<keyword id="KW-0862">Zinc</keyword>
<keyword id="KW-0863">Zinc-finger</keyword>
<accession>B1XQF6</accession>
<comment type="function">
    <text evidence="1">Participates actively in the response to hyperosmotic and heat shock by preventing the aggregation of stress-denatured proteins and by disaggregating proteins, also in an autonomous, DnaK-independent fashion. Unfolded proteins bind initially to DnaJ; upon interaction with the DnaJ-bound protein, DnaK hydrolyzes its bound ATP, resulting in the formation of a stable complex. GrpE releases ADP from DnaK; ATP binding to DnaK triggers the release of the substrate protein, thus completing the reaction cycle. Several rounds of ATP-dependent interactions between DnaJ, DnaK and GrpE are required for fully efficient folding. Also involved, together with DnaK and GrpE, in the DNA replication of plasmids through activation of initiation proteins.</text>
</comment>
<comment type="cofactor">
    <cofactor evidence="1">
        <name>Zn(2+)</name>
        <dbReference type="ChEBI" id="CHEBI:29105"/>
    </cofactor>
    <text evidence="1">Binds 2 Zn(2+) ions per monomer.</text>
</comment>
<comment type="subunit">
    <text evidence="1">Homodimer.</text>
</comment>
<comment type="subcellular location">
    <subcellularLocation>
        <location evidence="1">Cytoplasm</location>
    </subcellularLocation>
</comment>
<comment type="domain">
    <text evidence="1">The J domain is necessary and sufficient to stimulate DnaK ATPase activity. Zinc center 1 plays an important role in the autonomous, DnaK-independent chaperone activity of DnaJ. Zinc center 2 is essential for interaction with DnaK and for DnaJ activity.</text>
</comment>
<comment type="similarity">
    <text evidence="1">Belongs to the DnaJ family.</text>
</comment>
<sequence>MAGDFYEILGVSRDCGKDELKRAYRRLARQYHPDVNKDPGAEEKFKEINRAYEVLSEPETRARYDRFGEAGVSGAGAAGADYGDMGGFADIFETIFSGFGGMGTGATGGGRRRSGPMRGDDLRLDLKLDFKEAIFGGEKEIRIPHLETCKTCSGSGAKAGTSANTCGTCNGTGQVRRATRTPFGSFAQVSVCPTCNGEGQVIAEKCESCGGAGRKQETKKLKITIPAGVDSGTRLRVSREGDAGVKGGPPGDLYVYLAVNADKEFRRDGTNILSEIEISYLQAILGDTVKVKTVDGTEDLTIPAGLQPNKVLILEGKGVPKLGNPVSRGDHLITVKVMIPTKVSREEKELLHQLAKLKGTEHSKGGFEGLLGNLFHNK</sequence>
<proteinExistence type="inferred from homology"/>
<gene>
    <name evidence="1" type="primary">dnaJ</name>
    <name type="ordered locus">SYNPCC7002_A0693</name>
</gene>
<reference key="1">
    <citation type="submission" date="2008-02" db="EMBL/GenBank/DDBJ databases">
        <title>Complete sequence of Synechococcus sp. PCC 7002.</title>
        <authorList>
            <person name="Li T."/>
            <person name="Zhao J."/>
            <person name="Zhao C."/>
            <person name="Liu Z."/>
            <person name="Zhao F."/>
            <person name="Marquardt J."/>
            <person name="Nomura C.T."/>
            <person name="Persson S."/>
            <person name="Detter J.C."/>
            <person name="Richardson P.M."/>
            <person name="Lanz C."/>
            <person name="Schuster S.C."/>
            <person name="Wang J."/>
            <person name="Li S."/>
            <person name="Huang X."/>
            <person name="Cai T."/>
            <person name="Yu Z."/>
            <person name="Luo J."/>
            <person name="Zhao J."/>
            <person name="Bryant D.A."/>
        </authorList>
    </citation>
    <scope>NUCLEOTIDE SEQUENCE [LARGE SCALE GENOMIC DNA]</scope>
    <source>
        <strain>ATCC 27264 / PCC 7002 / PR-6</strain>
    </source>
</reference>
<organism>
    <name type="scientific">Picosynechococcus sp. (strain ATCC 27264 / PCC 7002 / PR-6)</name>
    <name type="common">Agmenellum quadruplicatum</name>
    <dbReference type="NCBI Taxonomy" id="32049"/>
    <lineage>
        <taxon>Bacteria</taxon>
        <taxon>Bacillati</taxon>
        <taxon>Cyanobacteriota</taxon>
        <taxon>Cyanophyceae</taxon>
        <taxon>Oscillatoriophycideae</taxon>
        <taxon>Chroococcales</taxon>
        <taxon>Geminocystaceae</taxon>
        <taxon>Picosynechococcus</taxon>
    </lineage>
</organism>